<proteinExistence type="inferred from homology"/>
<reference key="1">
    <citation type="journal article" date="2007" name="Mol. Genet. Genomics">
        <title>Chloroplast genomes of the diatoms Phaeodactylum tricornutum and Thalassiosira pseudonana: comparison with other plastid genomes of the red lineage.</title>
        <authorList>
            <person name="Oudot-Le Secq M.-P."/>
            <person name="Grimwood J."/>
            <person name="Shapiro H."/>
            <person name="Armbrust E.V."/>
            <person name="Bowler C."/>
            <person name="Green B.R."/>
        </authorList>
    </citation>
    <scope>NUCLEOTIDE SEQUENCE [LARGE SCALE GENOMIC DNA]</scope>
    <source>
        <strain>CCAP 1055/1</strain>
    </source>
</reference>
<dbReference type="EMBL" id="EF067920">
    <property type="protein sequence ID" value="ABK20597.1"/>
    <property type="molecule type" value="Genomic_DNA"/>
</dbReference>
<dbReference type="RefSeq" id="YP_874374.1">
    <property type="nucleotide sequence ID" value="NC_008588.1"/>
</dbReference>
<dbReference type="SMR" id="A0T0L7"/>
<dbReference type="GeneID" id="4524616"/>
<dbReference type="InParanoid" id="A0T0L7"/>
<dbReference type="Proteomes" id="UP000000759">
    <property type="component" value="Chloroplast"/>
</dbReference>
<dbReference type="GO" id="GO:0009535">
    <property type="term" value="C:chloroplast thylakoid membrane"/>
    <property type="evidence" value="ECO:0007669"/>
    <property type="project" value="UniProtKB-SubCell"/>
</dbReference>
<dbReference type="GO" id="GO:0009539">
    <property type="term" value="C:photosystem II reaction center"/>
    <property type="evidence" value="ECO:0007669"/>
    <property type="project" value="InterPro"/>
</dbReference>
<dbReference type="GO" id="GO:0015979">
    <property type="term" value="P:photosynthesis"/>
    <property type="evidence" value="ECO:0007669"/>
    <property type="project" value="UniProtKB-UniRule"/>
</dbReference>
<dbReference type="GO" id="GO:0042549">
    <property type="term" value="P:photosystem II stabilization"/>
    <property type="evidence" value="ECO:0007669"/>
    <property type="project" value="InterPro"/>
</dbReference>
<dbReference type="Gene3D" id="1.10.287.740">
    <property type="entry name" value="Photosystem II PsbZ, reaction centre"/>
    <property type="match status" value="1"/>
</dbReference>
<dbReference type="HAMAP" id="MF_00644">
    <property type="entry name" value="PSII_PsbZ"/>
    <property type="match status" value="1"/>
</dbReference>
<dbReference type="InterPro" id="IPR002644">
    <property type="entry name" value="PSII_PsbZ"/>
</dbReference>
<dbReference type="InterPro" id="IPR036512">
    <property type="entry name" value="PSII_PsbZ_sf"/>
</dbReference>
<dbReference type="NCBIfam" id="TIGR03043">
    <property type="entry name" value="PS_II_psbZ"/>
    <property type="match status" value="1"/>
</dbReference>
<dbReference type="Pfam" id="PF01737">
    <property type="entry name" value="Ycf9"/>
    <property type="match status" value="1"/>
</dbReference>
<dbReference type="SUPFAM" id="SSF161055">
    <property type="entry name" value="PsbZ-like"/>
    <property type="match status" value="1"/>
</dbReference>
<organism>
    <name type="scientific">Phaeodactylum tricornutum (strain CCAP 1055/1)</name>
    <dbReference type="NCBI Taxonomy" id="556484"/>
    <lineage>
        <taxon>Eukaryota</taxon>
        <taxon>Sar</taxon>
        <taxon>Stramenopiles</taxon>
        <taxon>Ochrophyta</taxon>
        <taxon>Bacillariophyta</taxon>
        <taxon>Bacillariophyceae</taxon>
        <taxon>Bacillariophycidae</taxon>
        <taxon>Naviculales</taxon>
        <taxon>Phaeodactylaceae</taxon>
        <taxon>Phaeodactylum</taxon>
    </lineage>
</organism>
<feature type="chain" id="PRO_0000277245" description="Photosystem II reaction center protein Z">
    <location>
        <begin position="1"/>
        <end position="61"/>
    </location>
</feature>
<feature type="transmembrane region" description="Helical" evidence="1">
    <location>
        <begin position="5"/>
        <end position="25"/>
    </location>
</feature>
<feature type="transmembrane region" description="Helical" evidence="1">
    <location>
        <begin position="38"/>
        <end position="58"/>
    </location>
</feature>
<protein>
    <recommendedName>
        <fullName evidence="1">Photosystem II reaction center protein Z</fullName>
        <shortName evidence="1">PSII-Z</shortName>
    </recommendedName>
</protein>
<name>PSBZ_PHATC</name>
<accession>A0T0L7</accession>
<gene>
    <name evidence="1" type="primary">psbZ</name>
</gene>
<keyword id="KW-0150">Chloroplast</keyword>
<keyword id="KW-0472">Membrane</keyword>
<keyword id="KW-0602">Photosynthesis</keyword>
<keyword id="KW-0604">Photosystem II</keyword>
<keyword id="KW-0934">Plastid</keyword>
<keyword id="KW-0674">Reaction center</keyword>
<keyword id="KW-1185">Reference proteome</keyword>
<keyword id="KW-0793">Thylakoid</keyword>
<keyword id="KW-0812">Transmembrane</keyword>
<keyword id="KW-1133">Transmembrane helix</keyword>
<comment type="function">
    <text evidence="1">May control the interaction of photosystem II (PSII) cores with the light-harvesting antenna, regulates electron flow through the 2 photosystem reaction centers. PSII is a light-driven water plastoquinone oxidoreductase, using light energy to abstract electrons from H(2)O, generating a proton gradient subsequently used for ATP formation.</text>
</comment>
<comment type="subunit">
    <text evidence="1">PSII is composed of 1 copy each of membrane proteins PsbA, PsbB, PsbC, PsbD, PsbE, PsbF, PsbH, PsbI, PsbJ, PsbK, PsbL, PsbM, PsbT, PsbX, PsbY, PsbZ, Psb30/Ycf12, at least 3 peripheral proteins of the oxygen-evolving complex and a large number of cofactors. It forms dimeric complexes.</text>
</comment>
<comment type="subcellular location">
    <subcellularLocation>
        <location evidence="1">Plastid</location>
        <location evidence="1">Chloroplast thylakoid membrane</location>
        <topology evidence="1">Multi-pass membrane protein</topology>
    </subcellularLocation>
</comment>
<comment type="similarity">
    <text evidence="1">Belongs to the PsbZ family.</text>
</comment>
<evidence type="ECO:0000255" key="1">
    <source>
        <dbReference type="HAMAP-Rule" id="MF_00644"/>
    </source>
</evidence>
<sequence>MITALTALLVLISLGLIVTVPVALATPGEWENSKSDFTKGFQAWVALVLVIAAADGVASSL</sequence>
<geneLocation type="chloroplast"/>